<keyword id="KW-0686">Riboflavin biosynthesis</keyword>
<keyword id="KW-0808">Transferase</keyword>
<name>RISB_STRA3</name>
<protein>
    <recommendedName>
        <fullName evidence="1">6,7-dimethyl-8-ribityllumazine synthase</fullName>
        <shortName evidence="1">DMRL synthase</shortName>
        <shortName evidence="1">LS</shortName>
        <shortName evidence="1">Lumazine synthase</shortName>
        <ecNumber evidence="1">2.5.1.78</ecNumber>
    </recommendedName>
</protein>
<gene>
    <name evidence="1" type="primary">ribH</name>
    <name type="ordered locus">gbs0770</name>
</gene>
<sequence length="156" mass="17187">MTIIEGQLVANEMKIGIVVSRFNELITSKLLSGAVDGLLRHGVSEEDIDIVWVPGAFEIPYMARKMALYKDYDAIICLGVVIKGSTDHYDYVCNEVTKGIGHLNSQSDIPHIFGVLTTDNIEQAIERAGTKAGNKGYDCALSAIEMVNLDKKLRER</sequence>
<reference key="1">
    <citation type="journal article" date="2002" name="Mol. Microbiol.">
        <title>Genome sequence of Streptococcus agalactiae, a pathogen causing invasive neonatal disease.</title>
        <authorList>
            <person name="Glaser P."/>
            <person name="Rusniok C."/>
            <person name="Buchrieser C."/>
            <person name="Chevalier F."/>
            <person name="Frangeul L."/>
            <person name="Msadek T."/>
            <person name="Zouine M."/>
            <person name="Couve E."/>
            <person name="Lalioui L."/>
            <person name="Poyart C."/>
            <person name="Trieu-Cuot P."/>
            <person name="Kunst F."/>
        </authorList>
    </citation>
    <scope>NUCLEOTIDE SEQUENCE [LARGE SCALE GENOMIC DNA]</scope>
    <source>
        <strain>NEM316</strain>
    </source>
</reference>
<proteinExistence type="inferred from homology"/>
<accession>Q8E657</accession>
<comment type="function">
    <text evidence="1">Catalyzes the formation of 6,7-dimethyl-8-ribityllumazine by condensation of 5-amino-6-(D-ribitylamino)uracil with 3,4-dihydroxy-2-butanone 4-phosphate. This is the penultimate step in the biosynthesis of riboflavin.</text>
</comment>
<comment type="catalytic activity">
    <reaction evidence="1">
        <text>(2S)-2-hydroxy-3-oxobutyl phosphate + 5-amino-6-(D-ribitylamino)uracil = 6,7-dimethyl-8-(1-D-ribityl)lumazine + phosphate + 2 H2O + H(+)</text>
        <dbReference type="Rhea" id="RHEA:26152"/>
        <dbReference type="ChEBI" id="CHEBI:15377"/>
        <dbReference type="ChEBI" id="CHEBI:15378"/>
        <dbReference type="ChEBI" id="CHEBI:15934"/>
        <dbReference type="ChEBI" id="CHEBI:43474"/>
        <dbReference type="ChEBI" id="CHEBI:58201"/>
        <dbReference type="ChEBI" id="CHEBI:58830"/>
        <dbReference type="EC" id="2.5.1.78"/>
    </reaction>
</comment>
<comment type="pathway">
    <text evidence="1">Cofactor biosynthesis; riboflavin biosynthesis; riboflavin from 2-hydroxy-3-oxobutyl phosphate and 5-amino-6-(D-ribitylamino)uracil: step 1/2.</text>
</comment>
<comment type="similarity">
    <text evidence="1">Belongs to the DMRL synthase family.</text>
</comment>
<organism>
    <name type="scientific">Streptococcus agalactiae serotype III (strain NEM316)</name>
    <dbReference type="NCBI Taxonomy" id="211110"/>
    <lineage>
        <taxon>Bacteria</taxon>
        <taxon>Bacillati</taxon>
        <taxon>Bacillota</taxon>
        <taxon>Bacilli</taxon>
        <taxon>Lactobacillales</taxon>
        <taxon>Streptococcaceae</taxon>
        <taxon>Streptococcus</taxon>
    </lineage>
</organism>
<feature type="chain" id="PRO_0000134813" description="6,7-dimethyl-8-ribityllumazine synthase">
    <location>
        <begin position="1"/>
        <end position="156"/>
    </location>
</feature>
<feature type="active site" description="Proton donor" evidence="1">
    <location>
        <position position="88"/>
    </location>
</feature>
<feature type="binding site" evidence="1">
    <location>
        <position position="22"/>
    </location>
    <ligand>
        <name>5-amino-6-(D-ribitylamino)uracil</name>
        <dbReference type="ChEBI" id="CHEBI:15934"/>
    </ligand>
</feature>
<feature type="binding site" evidence="1">
    <location>
        <begin position="56"/>
        <end position="58"/>
    </location>
    <ligand>
        <name>5-amino-6-(D-ribitylamino)uracil</name>
        <dbReference type="ChEBI" id="CHEBI:15934"/>
    </ligand>
</feature>
<feature type="binding site" evidence="1">
    <location>
        <begin position="80"/>
        <end position="82"/>
    </location>
    <ligand>
        <name>5-amino-6-(D-ribitylamino)uracil</name>
        <dbReference type="ChEBI" id="CHEBI:15934"/>
    </ligand>
</feature>
<feature type="binding site" evidence="1">
    <location>
        <begin position="85"/>
        <end position="86"/>
    </location>
    <ligand>
        <name>(2S)-2-hydroxy-3-oxobutyl phosphate</name>
        <dbReference type="ChEBI" id="CHEBI:58830"/>
    </ligand>
</feature>
<feature type="binding site" evidence="1">
    <location>
        <position position="113"/>
    </location>
    <ligand>
        <name>5-amino-6-(D-ribitylamino)uracil</name>
        <dbReference type="ChEBI" id="CHEBI:15934"/>
    </ligand>
</feature>
<feature type="binding site" evidence="1">
    <location>
        <position position="127"/>
    </location>
    <ligand>
        <name>(2S)-2-hydroxy-3-oxobutyl phosphate</name>
        <dbReference type="ChEBI" id="CHEBI:58830"/>
    </ligand>
</feature>
<evidence type="ECO:0000255" key="1">
    <source>
        <dbReference type="HAMAP-Rule" id="MF_00178"/>
    </source>
</evidence>
<dbReference type="EC" id="2.5.1.78" evidence="1"/>
<dbReference type="EMBL" id="AL766847">
    <property type="protein sequence ID" value="CAD46414.1"/>
    <property type="molecule type" value="Genomic_DNA"/>
</dbReference>
<dbReference type="SMR" id="Q8E657"/>
<dbReference type="KEGG" id="san:gbs0770"/>
<dbReference type="eggNOG" id="COG0054">
    <property type="taxonomic scope" value="Bacteria"/>
</dbReference>
<dbReference type="HOGENOM" id="CLU_089358_1_1_9"/>
<dbReference type="UniPathway" id="UPA00275">
    <property type="reaction ID" value="UER00404"/>
</dbReference>
<dbReference type="Proteomes" id="UP000000823">
    <property type="component" value="Chromosome"/>
</dbReference>
<dbReference type="GO" id="GO:0005829">
    <property type="term" value="C:cytosol"/>
    <property type="evidence" value="ECO:0007669"/>
    <property type="project" value="TreeGrafter"/>
</dbReference>
<dbReference type="GO" id="GO:0009349">
    <property type="term" value="C:riboflavin synthase complex"/>
    <property type="evidence" value="ECO:0007669"/>
    <property type="project" value="InterPro"/>
</dbReference>
<dbReference type="GO" id="GO:0000906">
    <property type="term" value="F:6,7-dimethyl-8-ribityllumazine synthase activity"/>
    <property type="evidence" value="ECO:0007669"/>
    <property type="project" value="UniProtKB-UniRule"/>
</dbReference>
<dbReference type="GO" id="GO:0009231">
    <property type="term" value="P:riboflavin biosynthetic process"/>
    <property type="evidence" value="ECO:0007669"/>
    <property type="project" value="UniProtKB-UniRule"/>
</dbReference>
<dbReference type="CDD" id="cd09209">
    <property type="entry name" value="Lumazine_synthase-I"/>
    <property type="match status" value="1"/>
</dbReference>
<dbReference type="FunFam" id="3.40.50.960:FF:000001">
    <property type="entry name" value="6,7-dimethyl-8-ribityllumazine synthase"/>
    <property type="match status" value="1"/>
</dbReference>
<dbReference type="Gene3D" id="3.40.50.960">
    <property type="entry name" value="Lumazine/riboflavin synthase"/>
    <property type="match status" value="1"/>
</dbReference>
<dbReference type="HAMAP" id="MF_00178">
    <property type="entry name" value="Lumazine_synth"/>
    <property type="match status" value="1"/>
</dbReference>
<dbReference type="InterPro" id="IPR034964">
    <property type="entry name" value="LS"/>
</dbReference>
<dbReference type="InterPro" id="IPR002180">
    <property type="entry name" value="LS/RS"/>
</dbReference>
<dbReference type="InterPro" id="IPR036467">
    <property type="entry name" value="LS/RS_sf"/>
</dbReference>
<dbReference type="NCBIfam" id="TIGR00114">
    <property type="entry name" value="lumazine-synth"/>
    <property type="match status" value="1"/>
</dbReference>
<dbReference type="NCBIfam" id="NF000812">
    <property type="entry name" value="PRK00061.1-4"/>
    <property type="match status" value="1"/>
</dbReference>
<dbReference type="PANTHER" id="PTHR21058:SF0">
    <property type="entry name" value="6,7-DIMETHYL-8-RIBITYLLUMAZINE SYNTHASE"/>
    <property type="match status" value="1"/>
</dbReference>
<dbReference type="PANTHER" id="PTHR21058">
    <property type="entry name" value="6,7-DIMETHYL-8-RIBITYLLUMAZINE SYNTHASE DMRL SYNTHASE LUMAZINE SYNTHASE"/>
    <property type="match status" value="1"/>
</dbReference>
<dbReference type="Pfam" id="PF00885">
    <property type="entry name" value="DMRL_synthase"/>
    <property type="match status" value="1"/>
</dbReference>
<dbReference type="SUPFAM" id="SSF52121">
    <property type="entry name" value="Lumazine synthase"/>
    <property type="match status" value="1"/>
</dbReference>